<gene>
    <name type="primary">RBIS</name>
</gene>
<name>RBIS_BOVIN</name>
<comment type="function">
    <text evidence="1">Trans-acting factor in ribosome biogenesis required for efficient 40S and 60S subunit production.</text>
</comment>
<comment type="subunit">
    <text evidence="1">Associates with the pre-60S ribosomal particles.</text>
</comment>
<comment type="subcellular location">
    <subcellularLocation>
        <location evidence="1">Nucleus</location>
        <location evidence="1">Nucleolus</location>
    </subcellularLocation>
</comment>
<proteinExistence type="inferred from homology"/>
<accession>A8YXZ5</accession>
<sequence>MAKNKLRGPKSRNVFHIASQKNFKAKNKAKPVTTNLKKINIMNEEKVNRVNKAFVNVQKELAHFAKSISLEPLQKELIPQQRHESKPVNVDEATRLMALL</sequence>
<reference key="1">
    <citation type="submission" date="2005-10" db="EMBL/GenBank/DDBJ databases">
        <authorList>
            <consortium name="NIH - Mammalian Gene Collection (MGC) project"/>
        </authorList>
    </citation>
    <scope>NUCLEOTIDE SEQUENCE [LARGE SCALE MRNA]</scope>
    <source>
        <strain>Crossbred X Angus</strain>
        <tissue>Liver</tissue>
    </source>
</reference>
<feature type="chain" id="PRO_0000324603" description="Ribosomal biogenesis factor">
    <location>
        <begin position="1"/>
        <end position="100"/>
    </location>
</feature>
<feature type="modified residue" description="Phosphoserine" evidence="1">
    <location>
        <position position="19"/>
    </location>
</feature>
<feature type="modified residue" description="N6-acetyllysine" evidence="1">
    <location>
        <position position="21"/>
    </location>
</feature>
<feature type="modified residue" description="Phosphoserine" evidence="1">
    <location>
        <position position="69"/>
    </location>
</feature>
<protein>
    <recommendedName>
        <fullName evidence="2">Ribosomal biogenesis factor</fullName>
    </recommendedName>
</protein>
<organism>
    <name type="scientific">Bos taurus</name>
    <name type="common">Bovine</name>
    <dbReference type="NCBI Taxonomy" id="9913"/>
    <lineage>
        <taxon>Eukaryota</taxon>
        <taxon>Metazoa</taxon>
        <taxon>Chordata</taxon>
        <taxon>Craniata</taxon>
        <taxon>Vertebrata</taxon>
        <taxon>Euteleostomi</taxon>
        <taxon>Mammalia</taxon>
        <taxon>Eutheria</taxon>
        <taxon>Laurasiatheria</taxon>
        <taxon>Artiodactyla</taxon>
        <taxon>Ruminantia</taxon>
        <taxon>Pecora</taxon>
        <taxon>Bovidae</taxon>
        <taxon>Bovinae</taxon>
        <taxon>Bos</taxon>
    </lineage>
</organism>
<dbReference type="EMBL" id="BC108159">
    <property type="protein sequence ID" value="AAI08160.1"/>
    <property type="molecule type" value="mRNA"/>
</dbReference>
<dbReference type="RefSeq" id="NP_001103538.1">
    <property type="nucleotide sequence ID" value="NM_001110068.2"/>
</dbReference>
<dbReference type="SMR" id="A8YXZ5"/>
<dbReference type="FunCoup" id="A8YXZ5">
    <property type="interactions" value="1014"/>
</dbReference>
<dbReference type="STRING" id="9913.ENSBTAP00000043082"/>
<dbReference type="GeneID" id="510007"/>
<dbReference type="KEGG" id="bta:510007"/>
<dbReference type="CTD" id="401466"/>
<dbReference type="HOGENOM" id="CLU_152931_0_0_1"/>
<dbReference type="InParanoid" id="A8YXZ5"/>
<dbReference type="OrthoDB" id="8828063at2759"/>
<dbReference type="TreeFam" id="TF330773"/>
<dbReference type="Proteomes" id="UP000009136">
    <property type="component" value="Unplaced"/>
</dbReference>
<dbReference type="GO" id="GO:0005730">
    <property type="term" value="C:nucleolus"/>
    <property type="evidence" value="ECO:0000250"/>
    <property type="project" value="UniProtKB"/>
</dbReference>
<dbReference type="GO" id="GO:0042254">
    <property type="term" value="P:ribosome biogenesis"/>
    <property type="evidence" value="ECO:0000250"/>
    <property type="project" value="UniProtKB"/>
</dbReference>
<dbReference type="InterPro" id="IPR031389">
    <property type="entry name" value="RBIS"/>
</dbReference>
<dbReference type="PANTHER" id="PTHR35544">
    <property type="entry name" value="RIBOSOMAL BIOGENESIS FACTOR"/>
    <property type="match status" value="1"/>
</dbReference>
<dbReference type="PANTHER" id="PTHR35544:SF4">
    <property type="entry name" value="RIBOSOMAL BIOGENESIS FACTOR"/>
    <property type="match status" value="1"/>
</dbReference>
<dbReference type="Pfam" id="PF15679">
    <property type="entry name" value="DUF4665"/>
    <property type="match status" value="1"/>
</dbReference>
<keyword id="KW-0007">Acetylation</keyword>
<keyword id="KW-0539">Nucleus</keyword>
<keyword id="KW-0597">Phosphoprotein</keyword>
<keyword id="KW-1185">Reference proteome</keyword>
<evidence type="ECO:0000250" key="1">
    <source>
        <dbReference type="UniProtKB" id="Q8N0T1"/>
    </source>
</evidence>
<evidence type="ECO:0000305" key="2"/>